<evidence type="ECO:0000255" key="1">
    <source>
        <dbReference type="HAMAP-Rule" id="MF_00186"/>
    </source>
</evidence>
<name>GLPK_AGRFC</name>
<proteinExistence type="inferred from homology"/>
<organism>
    <name type="scientific">Agrobacterium fabrum (strain C58 / ATCC 33970)</name>
    <name type="common">Agrobacterium tumefaciens (strain C58)</name>
    <dbReference type="NCBI Taxonomy" id="176299"/>
    <lineage>
        <taxon>Bacteria</taxon>
        <taxon>Pseudomonadati</taxon>
        <taxon>Pseudomonadota</taxon>
        <taxon>Alphaproteobacteria</taxon>
        <taxon>Hyphomicrobiales</taxon>
        <taxon>Rhizobiaceae</taxon>
        <taxon>Rhizobium/Agrobacterium group</taxon>
        <taxon>Agrobacterium</taxon>
        <taxon>Agrobacterium tumefaciens complex</taxon>
    </lineage>
</organism>
<sequence length="499" mass="54647">MGGYILAIDQGTTSTRSMVFDRDMRVIGVGQREFPQHFPASGWVEHDAEDIWKSVLETIRLALADAGIAASDIAAIGITNQRETTVLWDRNTGEAVHRAVVWQDRRAAPVCEDLKRRGLEPLFSKKTGLLLDPYFSGTKLKWLLDSVSGLREKAVKGEICFGTVDSFLIYRLTGGRRHVTDATNASRTLIYNIEDNAWDDELLSILNIPRAMLPEVLDCAADFGVTDKALLGAEIPILGVAGDQQAAVIGNACFEPGMMKSTYGTGCFALLNTGTDRVASTNRLLTTIAYRLDGVTTYALEGSIFIAGAAVQWLRDELGFISVASEVSALAEKADPKQRVYLVPAFTGLGAPYWDAEARGAIFGLTRGTGPAEFARAALESVAYQTFDLLDAMRKDWAGDNGKTVLRVDGGMVASDWTMQRLADILAAPVDRPVFLETTILGAAWLAASRAGIWPDRKAFADHWRRDRRFSPDMEESERKNAIAGWRDSVGRCLSKRDN</sequence>
<reference key="1">
    <citation type="journal article" date="2001" name="Science">
        <title>The genome of the natural genetic engineer Agrobacterium tumefaciens C58.</title>
        <authorList>
            <person name="Wood D.W."/>
            <person name="Setubal J.C."/>
            <person name="Kaul R."/>
            <person name="Monks D.E."/>
            <person name="Kitajima J.P."/>
            <person name="Okura V.K."/>
            <person name="Zhou Y."/>
            <person name="Chen L."/>
            <person name="Wood G.E."/>
            <person name="Almeida N.F. Jr."/>
            <person name="Woo L."/>
            <person name="Chen Y."/>
            <person name="Paulsen I.T."/>
            <person name="Eisen J.A."/>
            <person name="Karp P.D."/>
            <person name="Bovee D. Sr."/>
            <person name="Chapman P."/>
            <person name="Clendenning J."/>
            <person name="Deatherage G."/>
            <person name="Gillet W."/>
            <person name="Grant C."/>
            <person name="Kutyavin T."/>
            <person name="Levy R."/>
            <person name="Li M.-J."/>
            <person name="McClelland E."/>
            <person name="Palmieri A."/>
            <person name="Raymond C."/>
            <person name="Rouse G."/>
            <person name="Saenphimmachak C."/>
            <person name="Wu Z."/>
            <person name="Romero P."/>
            <person name="Gordon D."/>
            <person name="Zhang S."/>
            <person name="Yoo H."/>
            <person name="Tao Y."/>
            <person name="Biddle P."/>
            <person name="Jung M."/>
            <person name="Krespan W."/>
            <person name="Perry M."/>
            <person name="Gordon-Kamm B."/>
            <person name="Liao L."/>
            <person name="Kim S."/>
            <person name="Hendrick C."/>
            <person name="Zhao Z.-Y."/>
            <person name="Dolan M."/>
            <person name="Chumley F."/>
            <person name="Tingey S.V."/>
            <person name="Tomb J.-F."/>
            <person name="Gordon M.P."/>
            <person name="Olson M.V."/>
            <person name="Nester E.W."/>
        </authorList>
    </citation>
    <scope>NUCLEOTIDE SEQUENCE [LARGE SCALE GENOMIC DNA]</scope>
    <source>
        <strain>C58 / ATCC 33970</strain>
    </source>
</reference>
<reference key="2">
    <citation type="journal article" date="2001" name="Science">
        <title>Genome sequence of the plant pathogen and biotechnology agent Agrobacterium tumefaciens C58.</title>
        <authorList>
            <person name="Goodner B."/>
            <person name="Hinkle G."/>
            <person name="Gattung S."/>
            <person name="Miller N."/>
            <person name="Blanchard M."/>
            <person name="Qurollo B."/>
            <person name="Goldman B.S."/>
            <person name="Cao Y."/>
            <person name="Askenazi M."/>
            <person name="Halling C."/>
            <person name="Mullin L."/>
            <person name="Houmiel K."/>
            <person name="Gordon J."/>
            <person name="Vaudin M."/>
            <person name="Iartchouk O."/>
            <person name="Epp A."/>
            <person name="Liu F."/>
            <person name="Wollam C."/>
            <person name="Allinger M."/>
            <person name="Doughty D."/>
            <person name="Scott C."/>
            <person name="Lappas C."/>
            <person name="Markelz B."/>
            <person name="Flanagan C."/>
            <person name="Crowell C."/>
            <person name="Gurson J."/>
            <person name="Lomo C."/>
            <person name="Sear C."/>
            <person name="Strub G."/>
            <person name="Cielo C."/>
            <person name="Slater S."/>
        </authorList>
    </citation>
    <scope>NUCLEOTIDE SEQUENCE [LARGE SCALE GENOMIC DNA]</scope>
    <source>
        <strain>C58 / ATCC 33970</strain>
    </source>
</reference>
<feature type="chain" id="PRO_0000059428" description="Glycerol kinase">
    <location>
        <begin position="1"/>
        <end position="499"/>
    </location>
</feature>
<feature type="binding site" evidence="1">
    <location>
        <position position="12"/>
    </location>
    <ligand>
        <name>ADP</name>
        <dbReference type="ChEBI" id="CHEBI:456216"/>
    </ligand>
</feature>
<feature type="binding site" evidence="1">
    <location>
        <position position="12"/>
    </location>
    <ligand>
        <name>ATP</name>
        <dbReference type="ChEBI" id="CHEBI:30616"/>
    </ligand>
</feature>
<feature type="binding site" evidence="1">
    <location>
        <position position="12"/>
    </location>
    <ligand>
        <name>sn-glycerol 3-phosphate</name>
        <dbReference type="ChEBI" id="CHEBI:57597"/>
    </ligand>
</feature>
<feature type="binding site" evidence="1">
    <location>
        <position position="13"/>
    </location>
    <ligand>
        <name>ATP</name>
        <dbReference type="ChEBI" id="CHEBI:30616"/>
    </ligand>
</feature>
<feature type="binding site" evidence="1">
    <location>
        <position position="14"/>
    </location>
    <ligand>
        <name>ATP</name>
        <dbReference type="ChEBI" id="CHEBI:30616"/>
    </ligand>
</feature>
<feature type="binding site" evidence="1">
    <location>
        <position position="16"/>
    </location>
    <ligand>
        <name>ADP</name>
        <dbReference type="ChEBI" id="CHEBI:456216"/>
    </ligand>
</feature>
<feature type="binding site" evidence="1">
    <location>
        <position position="82"/>
    </location>
    <ligand>
        <name>glycerol</name>
        <dbReference type="ChEBI" id="CHEBI:17754"/>
    </ligand>
</feature>
<feature type="binding site" evidence="1">
    <location>
        <position position="82"/>
    </location>
    <ligand>
        <name>sn-glycerol 3-phosphate</name>
        <dbReference type="ChEBI" id="CHEBI:57597"/>
    </ligand>
</feature>
<feature type="binding site" evidence="1">
    <location>
        <position position="83"/>
    </location>
    <ligand>
        <name>glycerol</name>
        <dbReference type="ChEBI" id="CHEBI:17754"/>
    </ligand>
</feature>
<feature type="binding site" evidence="1">
    <location>
        <position position="83"/>
    </location>
    <ligand>
        <name>sn-glycerol 3-phosphate</name>
        <dbReference type="ChEBI" id="CHEBI:57597"/>
    </ligand>
</feature>
<feature type="binding site" evidence="1">
    <location>
        <position position="134"/>
    </location>
    <ligand>
        <name>glycerol</name>
        <dbReference type="ChEBI" id="CHEBI:17754"/>
    </ligand>
</feature>
<feature type="binding site" evidence="1">
    <location>
        <position position="134"/>
    </location>
    <ligand>
        <name>sn-glycerol 3-phosphate</name>
        <dbReference type="ChEBI" id="CHEBI:57597"/>
    </ligand>
</feature>
<feature type="binding site" evidence="1">
    <location>
        <position position="243"/>
    </location>
    <ligand>
        <name>glycerol</name>
        <dbReference type="ChEBI" id="CHEBI:17754"/>
    </ligand>
</feature>
<feature type="binding site" evidence="1">
    <location>
        <position position="243"/>
    </location>
    <ligand>
        <name>sn-glycerol 3-phosphate</name>
        <dbReference type="ChEBI" id="CHEBI:57597"/>
    </ligand>
</feature>
<feature type="binding site" evidence="1">
    <location>
        <position position="244"/>
    </location>
    <ligand>
        <name>glycerol</name>
        <dbReference type="ChEBI" id="CHEBI:17754"/>
    </ligand>
</feature>
<feature type="binding site" evidence="1">
    <location>
        <position position="265"/>
    </location>
    <ligand>
        <name>ADP</name>
        <dbReference type="ChEBI" id="CHEBI:456216"/>
    </ligand>
</feature>
<feature type="binding site" evidence="1">
    <location>
        <position position="265"/>
    </location>
    <ligand>
        <name>ATP</name>
        <dbReference type="ChEBI" id="CHEBI:30616"/>
    </ligand>
</feature>
<feature type="binding site" evidence="1">
    <location>
        <position position="308"/>
    </location>
    <ligand>
        <name>ADP</name>
        <dbReference type="ChEBI" id="CHEBI:456216"/>
    </ligand>
</feature>
<feature type="binding site" evidence="1">
    <location>
        <position position="308"/>
    </location>
    <ligand>
        <name>ATP</name>
        <dbReference type="ChEBI" id="CHEBI:30616"/>
    </ligand>
</feature>
<feature type="binding site" evidence="1">
    <location>
        <position position="312"/>
    </location>
    <ligand>
        <name>ATP</name>
        <dbReference type="ChEBI" id="CHEBI:30616"/>
    </ligand>
</feature>
<feature type="binding site" evidence="1">
    <location>
        <position position="411"/>
    </location>
    <ligand>
        <name>ADP</name>
        <dbReference type="ChEBI" id="CHEBI:456216"/>
    </ligand>
</feature>
<feature type="binding site" evidence="1">
    <location>
        <position position="411"/>
    </location>
    <ligand>
        <name>ATP</name>
        <dbReference type="ChEBI" id="CHEBI:30616"/>
    </ligand>
</feature>
<gene>
    <name evidence="1" type="primary">glpK</name>
    <name type="ordered locus">Atu3890</name>
    <name type="ORF">AGR_L_1914</name>
</gene>
<dbReference type="EC" id="2.7.1.30" evidence="1"/>
<dbReference type="EMBL" id="AE007870">
    <property type="protein sequence ID" value="AAK89529.2"/>
    <property type="molecule type" value="Genomic_DNA"/>
</dbReference>
<dbReference type="PIR" id="AD3035">
    <property type="entry name" value="AD3035"/>
</dbReference>
<dbReference type="PIR" id="G98250">
    <property type="entry name" value="G98250"/>
</dbReference>
<dbReference type="RefSeq" id="NP_356744.2">
    <property type="nucleotide sequence ID" value="NC_003063.2"/>
</dbReference>
<dbReference type="RefSeq" id="WP_010973406.1">
    <property type="nucleotide sequence ID" value="NC_003063.2"/>
</dbReference>
<dbReference type="SMR" id="Q8U940"/>
<dbReference type="STRING" id="176299.Atu3890"/>
<dbReference type="EnsemblBacteria" id="AAK89529">
    <property type="protein sequence ID" value="AAK89529"/>
    <property type="gene ID" value="Atu3890"/>
</dbReference>
<dbReference type="GeneID" id="1135764"/>
<dbReference type="KEGG" id="atu:Atu3890"/>
<dbReference type="PATRIC" id="fig|176299.10.peg.3714"/>
<dbReference type="eggNOG" id="COG0554">
    <property type="taxonomic scope" value="Bacteria"/>
</dbReference>
<dbReference type="HOGENOM" id="CLU_009281_2_3_5"/>
<dbReference type="OrthoDB" id="9805576at2"/>
<dbReference type="PhylomeDB" id="Q8U940"/>
<dbReference type="BioCyc" id="AGRO:ATU3890-MONOMER"/>
<dbReference type="UniPathway" id="UPA00618">
    <property type="reaction ID" value="UER00672"/>
</dbReference>
<dbReference type="Proteomes" id="UP000000813">
    <property type="component" value="Chromosome linear"/>
</dbReference>
<dbReference type="GO" id="GO:0005829">
    <property type="term" value="C:cytosol"/>
    <property type="evidence" value="ECO:0007669"/>
    <property type="project" value="TreeGrafter"/>
</dbReference>
<dbReference type="GO" id="GO:0005524">
    <property type="term" value="F:ATP binding"/>
    <property type="evidence" value="ECO:0007669"/>
    <property type="project" value="UniProtKB-UniRule"/>
</dbReference>
<dbReference type="GO" id="GO:0004370">
    <property type="term" value="F:glycerol kinase activity"/>
    <property type="evidence" value="ECO:0000250"/>
    <property type="project" value="UniProtKB"/>
</dbReference>
<dbReference type="GO" id="GO:0019563">
    <property type="term" value="P:glycerol catabolic process"/>
    <property type="evidence" value="ECO:0007669"/>
    <property type="project" value="UniProtKB-UniRule"/>
</dbReference>
<dbReference type="GO" id="GO:0006071">
    <property type="term" value="P:glycerol metabolic process"/>
    <property type="evidence" value="ECO:0000250"/>
    <property type="project" value="UniProtKB"/>
</dbReference>
<dbReference type="GO" id="GO:0006072">
    <property type="term" value="P:glycerol-3-phosphate metabolic process"/>
    <property type="evidence" value="ECO:0007669"/>
    <property type="project" value="InterPro"/>
</dbReference>
<dbReference type="CDD" id="cd07786">
    <property type="entry name" value="FGGY_EcGK_like"/>
    <property type="match status" value="1"/>
</dbReference>
<dbReference type="FunFam" id="3.30.420.40:FF:000007">
    <property type="entry name" value="Glycerol kinase"/>
    <property type="match status" value="1"/>
</dbReference>
<dbReference type="FunFam" id="3.30.420.40:FF:000008">
    <property type="entry name" value="Glycerol kinase"/>
    <property type="match status" value="1"/>
</dbReference>
<dbReference type="Gene3D" id="3.30.420.40">
    <property type="match status" value="2"/>
</dbReference>
<dbReference type="HAMAP" id="MF_00186">
    <property type="entry name" value="Glycerol_kin"/>
    <property type="match status" value="1"/>
</dbReference>
<dbReference type="InterPro" id="IPR043129">
    <property type="entry name" value="ATPase_NBD"/>
</dbReference>
<dbReference type="InterPro" id="IPR000577">
    <property type="entry name" value="Carb_kinase_FGGY"/>
</dbReference>
<dbReference type="InterPro" id="IPR018483">
    <property type="entry name" value="Carb_kinase_FGGY_CS"/>
</dbReference>
<dbReference type="InterPro" id="IPR018485">
    <property type="entry name" value="FGGY_C"/>
</dbReference>
<dbReference type="InterPro" id="IPR018484">
    <property type="entry name" value="FGGY_N"/>
</dbReference>
<dbReference type="InterPro" id="IPR005999">
    <property type="entry name" value="Glycerol_kin"/>
</dbReference>
<dbReference type="NCBIfam" id="TIGR01311">
    <property type="entry name" value="glycerol_kin"/>
    <property type="match status" value="1"/>
</dbReference>
<dbReference type="NCBIfam" id="NF000756">
    <property type="entry name" value="PRK00047.1"/>
    <property type="match status" value="1"/>
</dbReference>
<dbReference type="PANTHER" id="PTHR10196:SF78">
    <property type="entry name" value="GLYCEROL KINASE"/>
    <property type="match status" value="1"/>
</dbReference>
<dbReference type="PANTHER" id="PTHR10196">
    <property type="entry name" value="SUGAR KINASE"/>
    <property type="match status" value="1"/>
</dbReference>
<dbReference type="Pfam" id="PF02782">
    <property type="entry name" value="FGGY_C"/>
    <property type="match status" value="1"/>
</dbReference>
<dbReference type="Pfam" id="PF00370">
    <property type="entry name" value="FGGY_N"/>
    <property type="match status" value="1"/>
</dbReference>
<dbReference type="PIRSF" id="PIRSF000538">
    <property type="entry name" value="GlpK"/>
    <property type="match status" value="1"/>
</dbReference>
<dbReference type="SUPFAM" id="SSF53067">
    <property type="entry name" value="Actin-like ATPase domain"/>
    <property type="match status" value="2"/>
</dbReference>
<dbReference type="PROSITE" id="PS00445">
    <property type="entry name" value="FGGY_KINASES_2"/>
    <property type="match status" value="1"/>
</dbReference>
<comment type="function">
    <text evidence="1">Key enzyme in the regulation of glycerol uptake and metabolism. Catalyzes the phosphorylation of glycerol to yield sn-glycerol 3-phosphate.</text>
</comment>
<comment type="catalytic activity">
    <reaction evidence="1">
        <text>glycerol + ATP = sn-glycerol 3-phosphate + ADP + H(+)</text>
        <dbReference type="Rhea" id="RHEA:21644"/>
        <dbReference type="ChEBI" id="CHEBI:15378"/>
        <dbReference type="ChEBI" id="CHEBI:17754"/>
        <dbReference type="ChEBI" id="CHEBI:30616"/>
        <dbReference type="ChEBI" id="CHEBI:57597"/>
        <dbReference type="ChEBI" id="CHEBI:456216"/>
        <dbReference type="EC" id="2.7.1.30"/>
    </reaction>
</comment>
<comment type="activity regulation">
    <text evidence="1">Inhibited by fructose 1,6-bisphosphate (FBP).</text>
</comment>
<comment type="pathway">
    <text evidence="1">Polyol metabolism; glycerol degradation via glycerol kinase pathway; sn-glycerol 3-phosphate from glycerol: step 1/1.</text>
</comment>
<comment type="similarity">
    <text evidence="1">Belongs to the FGGY kinase family.</text>
</comment>
<protein>
    <recommendedName>
        <fullName evidence="1">Glycerol kinase</fullName>
        <ecNumber evidence="1">2.7.1.30</ecNumber>
    </recommendedName>
    <alternativeName>
        <fullName evidence="1">ATP:glycerol 3-phosphotransferase</fullName>
    </alternativeName>
    <alternativeName>
        <fullName evidence="1">Glycerokinase</fullName>
        <shortName evidence="1">GK</shortName>
    </alternativeName>
</protein>
<keyword id="KW-0067">ATP-binding</keyword>
<keyword id="KW-0319">Glycerol metabolism</keyword>
<keyword id="KW-0418">Kinase</keyword>
<keyword id="KW-0547">Nucleotide-binding</keyword>
<keyword id="KW-1185">Reference proteome</keyword>
<keyword id="KW-0808">Transferase</keyword>
<accession>Q8U940</accession>